<evidence type="ECO:0000255" key="1">
    <source>
        <dbReference type="HAMAP-Rule" id="MF_00050"/>
    </source>
</evidence>
<comment type="function">
    <text evidence="1">Associates with the EF-Tu.GDP complex and induces the exchange of GDP to GTP. It remains bound to the aminoacyl-tRNA.EF-Tu.GTP complex up to the GTP hydrolysis stage on the ribosome.</text>
</comment>
<comment type="subcellular location">
    <subcellularLocation>
        <location evidence="1">Cytoplasm</location>
    </subcellularLocation>
</comment>
<comment type="similarity">
    <text evidence="1">Belongs to the EF-Ts family.</text>
</comment>
<proteinExistence type="inferred from homology"/>
<accession>B1II65</accession>
<sequence length="307" mass="34199">MISAKMVKDLREKTGAGMMDCKKALTECDGDLEKAVEVLREKGLAAAAKKSGRVAAEGIVSTYISEDMKNGSIVEFNCETDFVSVNELFVELANNLSKQAAFSNVSTAEELLEEKYIADESKLVKDVITELIAKLGENMNLRRIAKLSVDKGVITSYIHGGGRIGVLVKLACEKEDAKLAEIAKDVAMQVAATNPLFLNRDGVDTDTLEKEKEIYRVQALNEGKPEKVVEKMVMGRINKYYKENCLVEQLWVKNGDYTITKYLQEQSKEIGADITVEAFVRYEKGEGIEKKEEDFAEEVQRQMNQGK</sequence>
<gene>
    <name evidence="1" type="primary">tsf</name>
    <name type="ordered locus">CLD_2206</name>
</gene>
<feature type="chain" id="PRO_1000116716" description="Elongation factor Ts">
    <location>
        <begin position="1"/>
        <end position="307"/>
    </location>
</feature>
<feature type="region of interest" description="Involved in Mg(2+) ion dislocation from EF-Tu" evidence="1">
    <location>
        <begin position="80"/>
        <end position="83"/>
    </location>
</feature>
<protein>
    <recommendedName>
        <fullName evidence="1">Elongation factor Ts</fullName>
        <shortName evidence="1">EF-Ts</shortName>
    </recommendedName>
</protein>
<keyword id="KW-0963">Cytoplasm</keyword>
<keyword id="KW-0251">Elongation factor</keyword>
<keyword id="KW-0648">Protein biosynthesis</keyword>
<dbReference type="EMBL" id="CP000939">
    <property type="protein sequence ID" value="ACA46822.1"/>
    <property type="molecule type" value="Genomic_DNA"/>
</dbReference>
<dbReference type="RefSeq" id="WP_003384678.1">
    <property type="nucleotide sequence ID" value="NC_010516.1"/>
</dbReference>
<dbReference type="SMR" id="B1II65"/>
<dbReference type="GeneID" id="92939185"/>
<dbReference type="KEGG" id="cbb:CLD_2206"/>
<dbReference type="HOGENOM" id="CLU_047155_0_0_9"/>
<dbReference type="Proteomes" id="UP000008541">
    <property type="component" value="Chromosome"/>
</dbReference>
<dbReference type="GO" id="GO:0005737">
    <property type="term" value="C:cytoplasm"/>
    <property type="evidence" value="ECO:0007669"/>
    <property type="project" value="UniProtKB-SubCell"/>
</dbReference>
<dbReference type="GO" id="GO:0003746">
    <property type="term" value="F:translation elongation factor activity"/>
    <property type="evidence" value="ECO:0007669"/>
    <property type="project" value="UniProtKB-UniRule"/>
</dbReference>
<dbReference type="CDD" id="cd14275">
    <property type="entry name" value="UBA_EF-Ts"/>
    <property type="match status" value="1"/>
</dbReference>
<dbReference type="FunFam" id="1.10.286.20:FF:000001">
    <property type="entry name" value="Elongation factor Ts"/>
    <property type="match status" value="1"/>
</dbReference>
<dbReference type="FunFam" id="1.10.8.10:FF:000001">
    <property type="entry name" value="Elongation factor Ts"/>
    <property type="match status" value="1"/>
</dbReference>
<dbReference type="Gene3D" id="1.10.286.20">
    <property type="match status" value="1"/>
</dbReference>
<dbReference type="Gene3D" id="1.10.8.10">
    <property type="entry name" value="DNA helicase RuvA subunit, C-terminal domain"/>
    <property type="match status" value="1"/>
</dbReference>
<dbReference type="Gene3D" id="3.30.479.20">
    <property type="entry name" value="Elongation factor Ts, dimerisation domain"/>
    <property type="match status" value="2"/>
</dbReference>
<dbReference type="HAMAP" id="MF_00050">
    <property type="entry name" value="EF_Ts"/>
    <property type="match status" value="1"/>
</dbReference>
<dbReference type="InterPro" id="IPR036402">
    <property type="entry name" value="EF-Ts_dimer_sf"/>
</dbReference>
<dbReference type="InterPro" id="IPR001816">
    <property type="entry name" value="Transl_elong_EFTs/EF1B"/>
</dbReference>
<dbReference type="InterPro" id="IPR014039">
    <property type="entry name" value="Transl_elong_EFTs/EF1B_dimer"/>
</dbReference>
<dbReference type="InterPro" id="IPR018101">
    <property type="entry name" value="Transl_elong_Ts_CS"/>
</dbReference>
<dbReference type="InterPro" id="IPR009060">
    <property type="entry name" value="UBA-like_sf"/>
</dbReference>
<dbReference type="NCBIfam" id="TIGR00116">
    <property type="entry name" value="tsf"/>
    <property type="match status" value="1"/>
</dbReference>
<dbReference type="PANTHER" id="PTHR11741">
    <property type="entry name" value="ELONGATION FACTOR TS"/>
    <property type="match status" value="1"/>
</dbReference>
<dbReference type="PANTHER" id="PTHR11741:SF0">
    <property type="entry name" value="ELONGATION FACTOR TS, MITOCHONDRIAL"/>
    <property type="match status" value="1"/>
</dbReference>
<dbReference type="Pfam" id="PF00889">
    <property type="entry name" value="EF_TS"/>
    <property type="match status" value="1"/>
</dbReference>
<dbReference type="SUPFAM" id="SSF54713">
    <property type="entry name" value="Elongation factor Ts (EF-Ts), dimerisation domain"/>
    <property type="match status" value="2"/>
</dbReference>
<dbReference type="SUPFAM" id="SSF46934">
    <property type="entry name" value="UBA-like"/>
    <property type="match status" value="1"/>
</dbReference>
<dbReference type="PROSITE" id="PS01126">
    <property type="entry name" value="EF_TS_1"/>
    <property type="match status" value="1"/>
</dbReference>
<organism>
    <name type="scientific">Clostridium botulinum (strain Okra / Type B1)</name>
    <dbReference type="NCBI Taxonomy" id="498213"/>
    <lineage>
        <taxon>Bacteria</taxon>
        <taxon>Bacillati</taxon>
        <taxon>Bacillota</taxon>
        <taxon>Clostridia</taxon>
        <taxon>Eubacteriales</taxon>
        <taxon>Clostridiaceae</taxon>
        <taxon>Clostridium</taxon>
    </lineage>
</organism>
<name>EFTS_CLOBK</name>
<reference key="1">
    <citation type="journal article" date="2007" name="PLoS ONE">
        <title>Analysis of the neurotoxin complex genes in Clostridium botulinum A1-A4 and B1 strains: BoNT/A3, /Ba4 and /B1 clusters are located within plasmids.</title>
        <authorList>
            <person name="Smith T.J."/>
            <person name="Hill K.K."/>
            <person name="Foley B.T."/>
            <person name="Detter J.C."/>
            <person name="Munk A.C."/>
            <person name="Bruce D.C."/>
            <person name="Doggett N.A."/>
            <person name="Smith L.A."/>
            <person name="Marks J.D."/>
            <person name="Xie G."/>
            <person name="Brettin T.S."/>
        </authorList>
    </citation>
    <scope>NUCLEOTIDE SEQUENCE [LARGE SCALE GENOMIC DNA]</scope>
    <source>
        <strain>Okra / Type B1</strain>
    </source>
</reference>